<protein>
    <recommendedName>
        <fullName evidence="1">Ribosome-recycling factor</fullName>
        <shortName evidence="1">RRF</shortName>
    </recommendedName>
    <alternativeName>
        <fullName evidence="1">Ribosome-releasing factor</fullName>
    </alternativeName>
</protein>
<organism>
    <name type="scientific">Zymomonas mobilis subsp. mobilis (strain ATCC 31821 / ZM4 / CP4)</name>
    <dbReference type="NCBI Taxonomy" id="264203"/>
    <lineage>
        <taxon>Bacteria</taxon>
        <taxon>Pseudomonadati</taxon>
        <taxon>Pseudomonadota</taxon>
        <taxon>Alphaproteobacteria</taxon>
        <taxon>Sphingomonadales</taxon>
        <taxon>Zymomonadaceae</taxon>
        <taxon>Zymomonas</taxon>
    </lineage>
</organism>
<comment type="function">
    <text evidence="1">Responsible for the release of ribosomes from messenger RNA at the termination of protein biosynthesis. May increase the efficiency of translation by recycling ribosomes from one round of translation to another.</text>
</comment>
<comment type="subcellular location">
    <subcellularLocation>
        <location evidence="1">Cytoplasm</location>
    </subcellularLocation>
</comment>
<comment type="similarity">
    <text evidence="1">Belongs to the RRF family.</text>
</comment>
<evidence type="ECO:0000255" key="1">
    <source>
        <dbReference type="HAMAP-Rule" id="MF_00040"/>
    </source>
</evidence>
<evidence type="ECO:0000305" key="2"/>
<name>RRF_ZYMMO</name>
<proteinExistence type="inferred from homology"/>
<accession>Q9X5F0</accession>
<accession>Q5NND3</accession>
<dbReference type="EMBL" id="AF124757">
    <property type="protein sequence ID" value="AAD29657.1"/>
    <property type="molecule type" value="Genomic_DNA"/>
</dbReference>
<dbReference type="EMBL" id="AE008692">
    <property type="protein sequence ID" value="AAV89777.1"/>
    <property type="molecule type" value="Genomic_DNA"/>
</dbReference>
<dbReference type="RefSeq" id="WP_011240980.1">
    <property type="nucleotide sequence ID" value="NZ_CP035711.1"/>
</dbReference>
<dbReference type="SMR" id="Q9X5F0"/>
<dbReference type="STRING" id="264203.ZMO1153"/>
<dbReference type="GeneID" id="79903722"/>
<dbReference type="KEGG" id="zmo:ZMO1153"/>
<dbReference type="eggNOG" id="COG0233">
    <property type="taxonomic scope" value="Bacteria"/>
</dbReference>
<dbReference type="HOGENOM" id="CLU_073981_2_0_5"/>
<dbReference type="Proteomes" id="UP000001173">
    <property type="component" value="Chromosome"/>
</dbReference>
<dbReference type="GO" id="GO:0005829">
    <property type="term" value="C:cytosol"/>
    <property type="evidence" value="ECO:0007669"/>
    <property type="project" value="GOC"/>
</dbReference>
<dbReference type="GO" id="GO:0043023">
    <property type="term" value="F:ribosomal large subunit binding"/>
    <property type="evidence" value="ECO:0007669"/>
    <property type="project" value="TreeGrafter"/>
</dbReference>
<dbReference type="GO" id="GO:0002184">
    <property type="term" value="P:cytoplasmic translational termination"/>
    <property type="evidence" value="ECO:0007669"/>
    <property type="project" value="TreeGrafter"/>
</dbReference>
<dbReference type="CDD" id="cd00520">
    <property type="entry name" value="RRF"/>
    <property type="match status" value="1"/>
</dbReference>
<dbReference type="FunFam" id="1.10.132.20:FF:000001">
    <property type="entry name" value="Ribosome-recycling factor"/>
    <property type="match status" value="1"/>
</dbReference>
<dbReference type="FunFam" id="3.30.1360.40:FF:000001">
    <property type="entry name" value="Ribosome-recycling factor"/>
    <property type="match status" value="1"/>
</dbReference>
<dbReference type="Gene3D" id="3.30.1360.40">
    <property type="match status" value="1"/>
</dbReference>
<dbReference type="Gene3D" id="1.10.132.20">
    <property type="entry name" value="Ribosome-recycling factor"/>
    <property type="match status" value="1"/>
</dbReference>
<dbReference type="HAMAP" id="MF_00040">
    <property type="entry name" value="RRF"/>
    <property type="match status" value="1"/>
</dbReference>
<dbReference type="InterPro" id="IPR002661">
    <property type="entry name" value="Ribosome_recyc_fac"/>
</dbReference>
<dbReference type="InterPro" id="IPR023584">
    <property type="entry name" value="Ribosome_recyc_fac_dom"/>
</dbReference>
<dbReference type="InterPro" id="IPR036191">
    <property type="entry name" value="RRF_sf"/>
</dbReference>
<dbReference type="NCBIfam" id="TIGR00496">
    <property type="entry name" value="frr"/>
    <property type="match status" value="1"/>
</dbReference>
<dbReference type="PANTHER" id="PTHR20982:SF3">
    <property type="entry name" value="MITOCHONDRIAL RIBOSOME RECYCLING FACTOR PSEUDO 1"/>
    <property type="match status" value="1"/>
</dbReference>
<dbReference type="PANTHER" id="PTHR20982">
    <property type="entry name" value="RIBOSOME RECYCLING FACTOR"/>
    <property type="match status" value="1"/>
</dbReference>
<dbReference type="Pfam" id="PF01765">
    <property type="entry name" value="RRF"/>
    <property type="match status" value="1"/>
</dbReference>
<dbReference type="SUPFAM" id="SSF55194">
    <property type="entry name" value="Ribosome recycling factor, RRF"/>
    <property type="match status" value="1"/>
</dbReference>
<gene>
    <name evidence="1" type="primary">frr</name>
    <name type="synonym">rrf</name>
    <name type="ordered locus">ZMO1153</name>
</gene>
<reference key="1">
    <citation type="submission" date="1999-01" db="EMBL/GenBank/DDBJ databases">
        <authorList>
            <person name="Lee H.J."/>
            <person name="Kang H.S."/>
        </authorList>
    </citation>
    <scope>NUCLEOTIDE SEQUENCE [GENOMIC DNA]</scope>
    <source>
        <strain>ATCC 31821 / ZM4 / CP4</strain>
    </source>
</reference>
<reference key="2">
    <citation type="journal article" date="2005" name="Nat. Biotechnol.">
        <title>The genome sequence of the ethanologenic bacterium Zymomonas mobilis ZM4.</title>
        <authorList>
            <person name="Seo J.-S."/>
            <person name="Chong H."/>
            <person name="Park H.S."/>
            <person name="Yoon K.-O."/>
            <person name="Jung C."/>
            <person name="Kim J.J."/>
            <person name="Hong J.H."/>
            <person name="Kim H."/>
            <person name="Kim J.-H."/>
            <person name="Kil J.-I."/>
            <person name="Park C.J."/>
            <person name="Oh H.-M."/>
            <person name="Lee J.-S."/>
            <person name="Jin S.-J."/>
            <person name="Um H.-W."/>
            <person name="Lee H.-J."/>
            <person name="Oh S.-J."/>
            <person name="Kim J.Y."/>
            <person name="Kang H.L."/>
            <person name="Lee S.Y."/>
            <person name="Lee K.J."/>
            <person name="Kang H.S."/>
        </authorList>
    </citation>
    <scope>NUCLEOTIDE SEQUENCE [LARGE SCALE GENOMIC DNA]</scope>
    <source>
        <strain>ATCC 31821 / ZM4 / CP4</strain>
    </source>
</reference>
<sequence>MAAYNKADLERRMKGAVESLKSDFSGLRTGRASTSLLDPVTVDVYGANMPLNQVATVSVPEPRMITVQVWDKSNVTPVDKAIRSAGLGLNPVVDGQMLRLPIPDLTEERRKELAKLVGQYSEKARIAVRNVRRDGNDQIKQDEKKNEISEDEKKRFENEVQKLTDKTIADIDALAVHKEKEILGK</sequence>
<feature type="chain" id="PRO_0000167589" description="Ribosome-recycling factor">
    <location>
        <begin position="1"/>
        <end position="185"/>
    </location>
</feature>
<feature type="sequence conflict" description="In Ref. 1; AAD29657." evidence="2" ref="1">
    <original>M</original>
    <variation>I</variation>
    <location>
        <position position="13"/>
    </location>
</feature>
<keyword id="KW-0963">Cytoplasm</keyword>
<keyword id="KW-0648">Protein biosynthesis</keyword>
<keyword id="KW-1185">Reference proteome</keyword>